<name>SPL8_ORYSI</name>
<accession>Q01KM7</accession>
<accession>A2XYG2</accession>
<reference key="1">
    <citation type="journal article" date="2002" name="Nature">
        <title>Sequence and analysis of rice chromosome 4.</title>
        <authorList>
            <person name="Feng Q."/>
            <person name="Zhang Y."/>
            <person name="Hao P."/>
            <person name="Wang S."/>
            <person name="Fu G."/>
            <person name="Huang Y."/>
            <person name="Li Y."/>
            <person name="Zhu J."/>
            <person name="Liu Y."/>
            <person name="Hu X."/>
            <person name="Jia P."/>
            <person name="Zhang Y."/>
            <person name="Zhao Q."/>
            <person name="Ying K."/>
            <person name="Yu S."/>
            <person name="Tang Y."/>
            <person name="Weng Q."/>
            <person name="Zhang L."/>
            <person name="Lu Y."/>
            <person name="Mu J."/>
            <person name="Lu Y."/>
            <person name="Zhang L.S."/>
            <person name="Yu Z."/>
            <person name="Fan D."/>
            <person name="Liu X."/>
            <person name="Lu T."/>
            <person name="Li C."/>
            <person name="Wu Y."/>
            <person name="Sun T."/>
            <person name="Lei H."/>
            <person name="Li T."/>
            <person name="Hu H."/>
            <person name="Guan J."/>
            <person name="Wu M."/>
            <person name="Zhang R."/>
            <person name="Zhou B."/>
            <person name="Chen Z."/>
            <person name="Chen L."/>
            <person name="Jin Z."/>
            <person name="Wang R."/>
            <person name="Yin H."/>
            <person name="Cai Z."/>
            <person name="Ren S."/>
            <person name="Lv G."/>
            <person name="Gu W."/>
            <person name="Zhu G."/>
            <person name="Tu Y."/>
            <person name="Jia J."/>
            <person name="Zhang Y."/>
            <person name="Chen J."/>
            <person name="Kang H."/>
            <person name="Chen X."/>
            <person name="Shao C."/>
            <person name="Sun Y."/>
            <person name="Hu Q."/>
            <person name="Zhang X."/>
            <person name="Zhang W."/>
            <person name="Wang L."/>
            <person name="Ding C."/>
            <person name="Sheng H."/>
            <person name="Gu J."/>
            <person name="Chen S."/>
            <person name="Ni L."/>
            <person name="Zhu F."/>
            <person name="Chen W."/>
            <person name="Lan L."/>
            <person name="Lai Y."/>
            <person name="Cheng Z."/>
            <person name="Gu M."/>
            <person name="Jiang J."/>
            <person name="Li J."/>
            <person name="Hong G."/>
            <person name="Xue Y."/>
            <person name="Han B."/>
        </authorList>
    </citation>
    <scope>NUCLEOTIDE SEQUENCE [LARGE SCALE GENOMIC DNA]</scope>
    <source>
        <strain>cv. Guang-Lu-Ai No.4</strain>
    </source>
</reference>
<reference key="2">
    <citation type="journal article" date="2005" name="PLoS Biol.">
        <title>The genomes of Oryza sativa: a history of duplications.</title>
        <authorList>
            <person name="Yu J."/>
            <person name="Wang J."/>
            <person name="Lin W."/>
            <person name="Li S."/>
            <person name="Li H."/>
            <person name="Zhou J."/>
            <person name="Ni P."/>
            <person name="Dong W."/>
            <person name="Hu S."/>
            <person name="Zeng C."/>
            <person name="Zhang J."/>
            <person name="Zhang Y."/>
            <person name="Li R."/>
            <person name="Xu Z."/>
            <person name="Li S."/>
            <person name="Li X."/>
            <person name="Zheng H."/>
            <person name="Cong L."/>
            <person name="Lin L."/>
            <person name="Yin J."/>
            <person name="Geng J."/>
            <person name="Li G."/>
            <person name="Shi J."/>
            <person name="Liu J."/>
            <person name="Lv H."/>
            <person name="Li J."/>
            <person name="Wang J."/>
            <person name="Deng Y."/>
            <person name="Ran L."/>
            <person name="Shi X."/>
            <person name="Wang X."/>
            <person name="Wu Q."/>
            <person name="Li C."/>
            <person name="Ren X."/>
            <person name="Wang J."/>
            <person name="Wang X."/>
            <person name="Li D."/>
            <person name="Liu D."/>
            <person name="Zhang X."/>
            <person name="Ji Z."/>
            <person name="Zhao W."/>
            <person name="Sun Y."/>
            <person name="Zhang Z."/>
            <person name="Bao J."/>
            <person name="Han Y."/>
            <person name="Dong L."/>
            <person name="Ji J."/>
            <person name="Chen P."/>
            <person name="Wu S."/>
            <person name="Liu J."/>
            <person name="Xiao Y."/>
            <person name="Bu D."/>
            <person name="Tan J."/>
            <person name="Yang L."/>
            <person name="Ye C."/>
            <person name="Zhang J."/>
            <person name="Xu J."/>
            <person name="Zhou Y."/>
            <person name="Yu Y."/>
            <person name="Zhang B."/>
            <person name="Zhuang S."/>
            <person name="Wei H."/>
            <person name="Liu B."/>
            <person name="Lei M."/>
            <person name="Yu H."/>
            <person name="Li Y."/>
            <person name="Xu H."/>
            <person name="Wei S."/>
            <person name="He X."/>
            <person name="Fang L."/>
            <person name="Zhang Z."/>
            <person name="Zhang Y."/>
            <person name="Huang X."/>
            <person name="Su Z."/>
            <person name="Tong W."/>
            <person name="Li J."/>
            <person name="Tong Z."/>
            <person name="Li S."/>
            <person name="Ye J."/>
            <person name="Wang L."/>
            <person name="Fang L."/>
            <person name="Lei T."/>
            <person name="Chen C.-S."/>
            <person name="Chen H.-C."/>
            <person name="Xu Z."/>
            <person name="Li H."/>
            <person name="Huang H."/>
            <person name="Zhang F."/>
            <person name="Xu H."/>
            <person name="Li N."/>
            <person name="Zhao C."/>
            <person name="Li S."/>
            <person name="Dong L."/>
            <person name="Huang Y."/>
            <person name="Li L."/>
            <person name="Xi Y."/>
            <person name="Qi Q."/>
            <person name="Li W."/>
            <person name="Zhang B."/>
            <person name="Hu W."/>
            <person name="Zhang Y."/>
            <person name="Tian X."/>
            <person name="Jiao Y."/>
            <person name="Liang X."/>
            <person name="Jin J."/>
            <person name="Gao L."/>
            <person name="Zheng W."/>
            <person name="Hao B."/>
            <person name="Liu S.-M."/>
            <person name="Wang W."/>
            <person name="Yuan L."/>
            <person name="Cao M."/>
            <person name="McDermott J."/>
            <person name="Samudrala R."/>
            <person name="Wang J."/>
            <person name="Wong G.K.-S."/>
            <person name="Yang H."/>
        </authorList>
    </citation>
    <scope>NUCLEOTIDE SEQUENCE [LARGE SCALE GENOMIC DNA]</scope>
    <source>
        <strain>cv. 93-11</strain>
    </source>
</reference>
<reference key="3">
    <citation type="journal article" date="2006" name="Plant Physiol.">
        <title>Genomic organization, differential expression, and interaction of SQUAMOSA promoter-binding-like transcription factors and microRNA156 in rice.</title>
        <authorList>
            <person name="Xie K."/>
            <person name="Wu C."/>
            <person name="Xiong L."/>
        </authorList>
    </citation>
    <scope>TISSUE SPECIFICITY</scope>
    <scope>GENE FAMILY</scope>
    <scope>NOMENCLATURE</scope>
</reference>
<reference key="4">
    <citation type="journal article" date="2008" name="Gene">
        <title>Comparative study of SBP-box gene family in Arabidopsis and rice.</title>
        <authorList>
            <person name="Yang Z."/>
            <person name="Wang X."/>
            <person name="Gu S."/>
            <person name="Hu Z."/>
            <person name="Xu H."/>
            <person name="Xu C."/>
        </authorList>
    </citation>
    <scope>GENE FAMILY</scope>
</reference>
<feature type="chain" id="PRO_0000308233" description="Squamosa promoter-binding-like protein 8">
    <location>
        <begin position="1"/>
        <end position="416"/>
    </location>
</feature>
<feature type="zinc finger region" description="SBP-type" evidence="3">
    <location>
        <begin position="182"/>
        <end position="260"/>
    </location>
</feature>
<feature type="region of interest" description="Disordered" evidence="4">
    <location>
        <begin position="11"/>
        <end position="53"/>
    </location>
</feature>
<feature type="region of interest" description="Disordered" evidence="4">
    <location>
        <begin position="250"/>
        <end position="299"/>
    </location>
</feature>
<feature type="short sequence motif" description="Bipartite nuclear localization signal" evidence="2">
    <location>
        <begin position="243"/>
        <end position="259"/>
    </location>
</feature>
<feature type="compositionally biased region" description="Basic and acidic residues" evidence="4">
    <location>
        <begin position="261"/>
        <end position="273"/>
    </location>
</feature>
<feature type="binding site" evidence="3">
    <location>
        <position position="185"/>
    </location>
    <ligand>
        <name>Zn(2+)</name>
        <dbReference type="ChEBI" id="CHEBI:29105"/>
        <label>1</label>
    </ligand>
</feature>
<feature type="binding site" evidence="3">
    <location>
        <position position="190"/>
    </location>
    <ligand>
        <name>Zn(2+)</name>
        <dbReference type="ChEBI" id="CHEBI:29105"/>
        <label>1</label>
    </ligand>
</feature>
<feature type="binding site" evidence="3">
    <location>
        <position position="207"/>
    </location>
    <ligand>
        <name>Zn(2+)</name>
        <dbReference type="ChEBI" id="CHEBI:29105"/>
        <label>1</label>
    </ligand>
</feature>
<feature type="binding site" evidence="3">
    <location>
        <position position="210"/>
    </location>
    <ligand>
        <name>Zn(2+)</name>
        <dbReference type="ChEBI" id="CHEBI:29105"/>
        <label>1</label>
    </ligand>
</feature>
<feature type="binding site" evidence="3">
    <location>
        <position position="227"/>
    </location>
    <ligand>
        <name>Zn(2+)</name>
        <dbReference type="ChEBI" id="CHEBI:29105"/>
        <label>2</label>
    </ligand>
</feature>
<feature type="binding site" evidence="3">
    <location>
        <position position="230"/>
    </location>
    <ligand>
        <name>Zn(2+)</name>
        <dbReference type="ChEBI" id="CHEBI:29105"/>
        <label>2</label>
    </ligand>
</feature>
<feature type="binding site" evidence="3">
    <location>
        <position position="234"/>
    </location>
    <ligand>
        <name>Zn(2+)</name>
        <dbReference type="ChEBI" id="CHEBI:29105"/>
        <label>2</label>
    </ligand>
</feature>
<feature type="binding site" evidence="3">
    <location>
        <position position="246"/>
    </location>
    <ligand>
        <name>Zn(2+)</name>
        <dbReference type="ChEBI" id="CHEBI:29105"/>
        <label>2</label>
    </ligand>
</feature>
<feature type="sequence conflict" description="In Ref. 2; EAY95872." evidence="6" ref="2">
    <original>V</original>
    <variation>L</variation>
    <location>
        <position position="323"/>
    </location>
</feature>
<gene>
    <name type="primary">SPL8</name>
    <name type="synonym">LG1</name>
    <name type="ORF">OsI_017105</name>
    <name type="ORF">OSIGBa0158D24.2</name>
</gene>
<proteinExistence type="evidence at transcript level"/>
<comment type="function">
    <text evidence="1">Probable transcription factor that plays an important role in building the laminar joint between leaf blade and leaf sheath boundary, thereby controlling ligule and auricle development.</text>
</comment>
<comment type="subcellular location">
    <subcellularLocation>
        <location evidence="6">Nucleus</location>
    </subcellularLocation>
</comment>
<comment type="tissue specificity">
    <text evidence="5">Expressed in stems, leaf sheaths, and young panicles.</text>
</comment>
<comment type="domain">
    <text evidence="1">The SBP-type zinc finger is required for the binding to DNA.</text>
</comment>
<comment type="sequence caution" evidence="6">
    <conflict type="erroneous gene model prediction">
        <sequence resource="EMBL-CDS" id="EAY95872"/>
    </conflict>
</comment>
<keyword id="KW-0238">DNA-binding</keyword>
<keyword id="KW-0479">Metal-binding</keyword>
<keyword id="KW-0539">Nucleus</keyword>
<keyword id="KW-1185">Reference proteome</keyword>
<keyword id="KW-0804">Transcription</keyword>
<keyword id="KW-0805">Transcription regulation</keyword>
<keyword id="KW-0862">Zinc</keyword>
<keyword id="KW-0863">Zinc-finger</keyword>
<sequence length="416" mass="44995">MMNVPSAAAASSCDDFGYNATPPPPPSLLPIMDQDGGGGSIQRDHHHHHNHQQLGYNLEPSSLALLPPSNAAAAAAHHATIAHASPHDLLQFYPTSHYLAAAGGAGGGGNPYSHFTAAAAAGSTFQSYYQQPPQAAPEYYFPTLVSSAEENMASFAATQLGLNLGYRTYFPPRGGYTYGHHPPRCQAEGCKADLSSAKRYHRRHKVCEHHSKAPVVVTAGGLHQRFCQQCSRFHLLDEFDDAKKSCRKRLADHNRRRRKSKPSDGEHSGEKRRAQANKSAATKDKAGSSSKNAGIGDGFETQLLGGAHMSKDQDQAMDLGEVVKEAVDPKGKASMQQQQQQAHHGIHQQSHQQHGFPFPSSSGSCLFPQSQGAVSSTDTSNIAQVQEPSLAFHQQHHQHSNILQLGQAMFDLDFDH</sequence>
<protein>
    <recommendedName>
        <fullName>Squamosa promoter-binding-like protein 8</fullName>
    </recommendedName>
    <alternativeName>
        <fullName>OsLG1</fullName>
    </alternativeName>
    <alternativeName>
        <fullName>Protein LIGULELESS 1</fullName>
    </alternativeName>
</protein>
<dbReference type="EMBL" id="CR855135">
    <property type="protein sequence ID" value="CAH66694.1"/>
    <property type="molecule type" value="Genomic_DNA"/>
</dbReference>
<dbReference type="EMBL" id="CM000129">
    <property type="protein sequence ID" value="EAY95872.1"/>
    <property type="status" value="ALT_SEQ"/>
    <property type="molecule type" value="Genomic_DNA"/>
</dbReference>
<dbReference type="SMR" id="Q01KM7"/>
<dbReference type="STRING" id="39946.Q01KM7"/>
<dbReference type="EnsemblPlants" id="OsMH63_04G029840_01">
    <property type="protein sequence ID" value="OsMH63_04G029840_01"/>
    <property type="gene ID" value="OsMH63_04G029840"/>
</dbReference>
<dbReference type="EnsemblPlants" id="OsPr106_04g0029830.01">
    <property type="protein sequence ID" value="OsPr106_04g0029830.01"/>
    <property type="gene ID" value="OsPr106_04g0029830"/>
</dbReference>
<dbReference type="Gramene" id="OsMH63_04G029840_01">
    <property type="protein sequence ID" value="OsMH63_04G029840_01"/>
    <property type="gene ID" value="OsMH63_04G029840"/>
</dbReference>
<dbReference type="Gramene" id="OsPr106_04g0029830.01">
    <property type="protein sequence ID" value="OsPr106_04g0029830.01"/>
    <property type="gene ID" value="OsPr106_04g0029830"/>
</dbReference>
<dbReference type="HOGENOM" id="CLU_689660_0_0_1"/>
<dbReference type="Proteomes" id="UP000007015">
    <property type="component" value="Chromosome 4"/>
</dbReference>
<dbReference type="GO" id="GO:0005634">
    <property type="term" value="C:nucleus"/>
    <property type="evidence" value="ECO:0007669"/>
    <property type="project" value="UniProtKB-SubCell"/>
</dbReference>
<dbReference type="GO" id="GO:0003677">
    <property type="term" value="F:DNA binding"/>
    <property type="evidence" value="ECO:0007669"/>
    <property type="project" value="UniProtKB-KW"/>
</dbReference>
<dbReference type="GO" id="GO:0008270">
    <property type="term" value="F:zinc ion binding"/>
    <property type="evidence" value="ECO:0007669"/>
    <property type="project" value="UniProtKB-KW"/>
</dbReference>
<dbReference type="Gene3D" id="4.10.1100.10">
    <property type="entry name" value="Transcription factor, SBP-box domain"/>
    <property type="match status" value="1"/>
</dbReference>
<dbReference type="InterPro" id="IPR044817">
    <property type="entry name" value="SBP-like"/>
</dbReference>
<dbReference type="InterPro" id="IPR004333">
    <property type="entry name" value="SBP_dom"/>
</dbReference>
<dbReference type="InterPro" id="IPR036893">
    <property type="entry name" value="SBP_sf"/>
</dbReference>
<dbReference type="PANTHER" id="PTHR31251">
    <property type="entry name" value="SQUAMOSA PROMOTER-BINDING-LIKE PROTEIN 4"/>
    <property type="match status" value="1"/>
</dbReference>
<dbReference type="PANTHER" id="PTHR31251:SF198">
    <property type="entry name" value="SQUAMOSA PROMOTER-BINDING-LIKE PROTEIN 8"/>
    <property type="match status" value="1"/>
</dbReference>
<dbReference type="Pfam" id="PF03110">
    <property type="entry name" value="SBP"/>
    <property type="match status" value="1"/>
</dbReference>
<dbReference type="SUPFAM" id="SSF103612">
    <property type="entry name" value="SBT domain"/>
    <property type="match status" value="1"/>
</dbReference>
<dbReference type="PROSITE" id="PS51141">
    <property type="entry name" value="ZF_SBP"/>
    <property type="match status" value="1"/>
</dbReference>
<evidence type="ECO:0000250" key="1"/>
<evidence type="ECO:0000255" key="2"/>
<evidence type="ECO:0000255" key="3">
    <source>
        <dbReference type="PROSITE-ProRule" id="PRU00470"/>
    </source>
</evidence>
<evidence type="ECO:0000256" key="4">
    <source>
        <dbReference type="SAM" id="MobiDB-lite"/>
    </source>
</evidence>
<evidence type="ECO:0000269" key="5">
    <source>
    </source>
</evidence>
<evidence type="ECO:0000305" key="6"/>
<organism>
    <name type="scientific">Oryza sativa subsp. indica</name>
    <name type="common">Rice</name>
    <dbReference type="NCBI Taxonomy" id="39946"/>
    <lineage>
        <taxon>Eukaryota</taxon>
        <taxon>Viridiplantae</taxon>
        <taxon>Streptophyta</taxon>
        <taxon>Embryophyta</taxon>
        <taxon>Tracheophyta</taxon>
        <taxon>Spermatophyta</taxon>
        <taxon>Magnoliopsida</taxon>
        <taxon>Liliopsida</taxon>
        <taxon>Poales</taxon>
        <taxon>Poaceae</taxon>
        <taxon>BOP clade</taxon>
        <taxon>Oryzoideae</taxon>
        <taxon>Oryzeae</taxon>
        <taxon>Oryzinae</taxon>
        <taxon>Oryza</taxon>
        <taxon>Oryza sativa</taxon>
    </lineage>
</organism>